<gene>
    <name evidence="5" type="primary">RACC</name>
    <name evidence="9" type="ORF">EHI_070730</name>
</gene>
<keyword id="KW-0002">3D-structure</keyword>
<keyword id="KW-1003">Cell membrane</keyword>
<keyword id="KW-0963">Cytoplasm</keyword>
<keyword id="KW-0206">Cytoskeleton</keyword>
<keyword id="KW-0342">GTP-binding</keyword>
<keyword id="KW-0378">Hydrolase</keyword>
<keyword id="KW-0449">Lipoprotein</keyword>
<keyword id="KW-0460">Magnesium</keyword>
<keyword id="KW-0472">Membrane</keyword>
<keyword id="KW-0479">Metal-binding</keyword>
<keyword id="KW-0488">Methylation</keyword>
<keyword id="KW-0547">Nucleotide-binding</keyword>
<keyword id="KW-0636">Prenylation</keyword>
<keyword id="KW-1185">Reference proteome</keyword>
<sequence>MSEKPTSIKLVVVGDGAVGKTCLLISYSIRKFPEDYIPTVFDNYVVSLTAGTRQIQLALWDTAGQEEYDQLRPLSYSSASIFLICFSVTSSVSYDNVITKWHPEVIHFAPKVPIILVGTKLDTRNDPAIVKRLTEQGMTVINTAKGEELKNRIKAVKYIECSAKTSENLKTVFDEAVKTVLMNKPQQRSKCALL</sequence>
<comment type="function">
    <text evidence="2">Small GTPase which cycles between active GTP-bound and inactive GDP-bound states.</text>
</comment>
<comment type="catalytic activity">
    <reaction evidence="2">
        <text>GTP + H2O = GDP + phosphate + H(+)</text>
        <dbReference type="Rhea" id="RHEA:19669"/>
        <dbReference type="ChEBI" id="CHEBI:15377"/>
        <dbReference type="ChEBI" id="CHEBI:15378"/>
        <dbReference type="ChEBI" id="CHEBI:37565"/>
        <dbReference type="ChEBI" id="CHEBI:43474"/>
        <dbReference type="ChEBI" id="CHEBI:58189"/>
        <dbReference type="EC" id="3.6.5.2"/>
    </reaction>
    <physiologicalReaction direction="left-to-right" evidence="2">
        <dbReference type="Rhea" id="RHEA:19670"/>
    </physiologicalReaction>
</comment>
<comment type="cofactor">
    <cofactor evidence="7">
        <name>Mg(2+)</name>
        <dbReference type="ChEBI" id="CHEBI:18420"/>
    </cofactor>
</comment>
<comment type="activity regulation">
    <text evidence="2">Regulated by guanine nucleotide exchange factors (GEFs) which promote the exchange of bound GDP for free GTP, GTPase activating proteins (GAPs) which increase the GTP hydrolysis activity, and GDP dissociation inhibitors which inhibit the dissociation of the nucleotide from the GTPase.</text>
</comment>
<comment type="subunit">
    <text evidence="3">Interacts (GTP-bound form) with PAK4 (via CRIB domain) (PubMed:25529118). Interacts (GTP-bound form) with PAK5 (via CRIB domain) (PubMed:25529118).</text>
</comment>
<comment type="subcellular location">
    <subcellularLocation>
        <location evidence="2">Cell membrane</location>
        <topology evidence="2">Lipid-anchor</topology>
        <orientation evidence="2">Cytoplasmic side</orientation>
    </subcellularLocation>
    <subcellularLocation>
        <location evidence="2">Cytoplasm</location>
        <location evidence="2">Cytoskeleton</location>
    </subcellularLocation>
    <subcellularLocation>
        <location evidence="2">Cytoplasm</location>
    </subcellularLocation>
</comment>
<comment type="domain">
    <text evidence="7">The switch 1 and switch 2 motifs undergo large conformational changes during GTP/GDP cycle and play important roles in the interaction with downstream effectors.</text>
</comment>
<comment type="similarity">
    <text evidence="6">Belongs to the small GTPase superfamily. Rho family.</text>
</comment>
<reference evidence="8" key="1">
    <citation type="journal article" date="1996" name="Gene">
        <title>Heterogeneity of Entamoeba histolytica rac genes encoding p21rac homologues.</title>
        <authorList>
            <person name="Lohia A."/>
            <person name="Samuelson J."/>
        </authorList>
    </citation>
    <scope>NUCLEOTIDE SEQUENCE [GENOMIC DNA]</scope>
    <source>
        <strain evidence="8">ATCC 30459 / HM-1:IMSS / ABRM</strain>
    </source>
</reference>
<reference evidence="9" key="2">
    <citation type="journal article" date="2005" name="Nature">
        <title>The genome of the protist parasite Entamoeba histolytica.</title>
        <authorList>
            <person name="Loftus B.J."/>
            <person name="Anderson I."/>
            <person name="Davies R."/>
            <person name="Alsmark U.C."/>
            <person name="Samuelson J."/>
            <person name="Amedeo P."/>
            <person name="Roncaglia P."/>
            <person name="Berriman M."/>
            <person name="Hirt R.P."/>
            <person name="Mann B.J."/>
            <person name="Nozaki T."/>
            <person name="Suh B."/>
            <person name="Pop M."/>
            <person name="Duchene M."/>
            <person name="Ackers J."/>
            <person name="Tannich E."/>
            <person name="Leippe M."/>
            <person name="Hofer M."/>
            <person name="Bruchhaus I."/>
            <person name="Willhoeft U."/>
            <person name="Bhattacharya A."/>
            <person name="Chillingworth T."/>
            <person name="Churcher C.M."/>
            <person name="Hance Z."/>
            <person name="Harris B."/>
            <person name="Harris D."/>
            <person name="Jagels K."/>
            <person name="Moule S."/>
            <person name="Mungall K.L."/>
            <person name="Ormond D."/>
            <person name="Squares R."/>
            <person name="Whitehead S."/>
            <person name="Quail M.A."/>
            <person name="Rabbinowitsch E."/>
            <person name="Norbertczak H."/>
            <person name="Price C."/>
            <person name="Wang Z."/>
            <person name="Guillen N."/>
            <person name="Gilchrist C."/>
            <person name="Stroup S.E."/>
            <person name="Bhattacharya S."/>
            <person name="Lohia A."/>
            <person name="Foster P.G."/>
            <person name="Sicheritz-Ponten T."/>
            <person name="Weber C."/>
            <person name="Singh U."/>
            <person name="Mukherjee C."/>
            <person name="El-Sayed N.M.A."/>
            <person name="Petri W.A."/>
            <person name="Clark C.G."/>
            <person name="Embley T.M."/>
            <person name="Barrell B.G."/>
            <person name="Fraser C.M."/>
            <person name="Hall N."/>
        </authorList>
    </citation>
    <scope>NUCLEOTIDE SEQUENCE [LARGE SCALE GENOMIC DNA]</scope>
    <source>
        <strain evidence="9">ATCC 30459 / HM-1:IMSS / ABRM</strain>
    </source>
</reference>
<reference evidence="10" key="3">
    <citation type="journal article" date="2015" name="Biochemistry">
        <title>Entamoeba histolytica RacC selectively engages p21-activated kinase effectors.</title>
        <authorList>
            <person name="Bosch D.E."/>
            <person name="Siderovski D.P."/>
        </authorList>
    </citation>
    <scope>X-RAY CRYSTALLOGRAPHY (2.35 ANGSTROMS) OF 1-183 OF MUTANT LEU-65 IN COMPLEX WITH GTP; MAGNESIUM AND PAK4</scope>
    <scope>COFACTOR</scope>
    <scope>INTERACTION WITH PAK4 AND PAK5</scope>
    <scope>SWITCH MOTIF</scope>
    <scope>MUTAGENESIS OF GLN-65</scope>
</reference>
<name>RACC_ENTH1</name>
<dbReference type="EC" id="3.6.5.2" evidence="2"/>
<dbReference type="EMBL" id="U29722">
    <property type="protein sequence ID" value="AAC47298.1"/>
    <property type="molecule type" value="Genomic_DNA"/>
</dbReference>
<dbReference type="EMBL" id="DS571284">
    <property type="protein sequence ID" value="EAL47310.1"/>
    <property type="molecule type" value="Genomic_DNA"/>
</dbReference>
<dbReference type="PIR" id="JC4932">
    <property type="entry name" value="JC4932"/>
</dbReference>
<dbReference type="RefSeq" id="XP_652693.1">
    <property type="nucleotide sequence ID" value="XM_647601.2"/>
</dbReference>
<dbReference type="PDB" id="4MIT">
    <property type="method" value="X-ray"/>
    <property type="resolution" value="2.35 A"/>
    <property type="chains" value="A/B/C/D=1-183"/>
</dbReference>
<dbReference type="PDBsum" id="4MIT"/>
<dbReference type="SMR" id="Q24816"/>
<dbReference type="DIP" id="DIP-60102N"/>
<dbReference type="IntAct" id="Q24816">
    <property type="interactions" value="1"/>
</dbReference>
<dbReference type="STRING" id="5759.C4M5T0"/>
<dbReference type="EnsemblProtists" id="GAT96793">
    <property type="protein sequence ID" value="GAT96793"/>
    <property type="gene ID" value="CL6EHI_070730"/>
</dbReference>
<dbReference type="EnsemblProtists" id="rna_EHI_070730-1">
    <property type="protein sequence ID" value="rna_EHI_070730-1"/>
    <property type="gene ID" value="EHI_070730"/>
</dbReference>
<dbReference type="GeneID" id="3407007"/>
<dbReference type="KEGG" id="ehi:EHI_070730"/>
<dbReference type="VEuPathDB" id="AmoebaDB:EHI5A_060860"/>
<dbReference type="VEuPathDB" id="AmoebaDB:EHI7A_090820"/>
<dbReference type="VEuPathDB" id="AmoebaDB:EHI8A_093900"/>
<dbReference type="VEuPathDB" id="AmoebaDB:EHI_070730"/>
<dbReference type="VEuPathDB" id="AmoebaDB:KM1_331620"/>
<dbReference type="eggNOG" id="KOG0393">
    <property type="taxonomic scope" value="Eukaryota"/>
</dbReference>
<dbReference type="HOGENOM" id="CLU_041217_21_2_1"/>
<dbReference type="OMA" id="ENVYTKW"/>
<dbReference type="OrthoDB" id="8830751at2759"/>
<dbReference type="EvolutionaryTrace" id="Q24816"/>
<dbReference type="Proteomes" id="UP000001926">
    <property type="component" value="Partially assembled WGS sequence"/>
</dbReference>
<dbReference type="GO" id="GO:0042995">
    <property type="term" value="C:cell projection"/>
    <property type="evidence" value="ECO:0000318"/>
    <property type="project" value="GO_Central"/>
</dbReference>
<dbReference type="GO" id="GO:0031410">
    <property type="term" value="C:cytoplasmic vesicle"/>
    <property type="evidence" value="ECO:0000318"/>
    <property type="project" value="GO_Central"/>
</dbReference>
<dbReference type="GO" id="GO:0005856">
    <property type="term" value="C:cytoskeleton"/>
    <property type="evidence" value="ECO:0000318"/>
    <property type="project" value="GO_Central"/>
</dbReference>
<dbReference type="GO" id="GO:0005886">
    <property type="term" value="C:plasma membrane"/>
    <property type="evidence" value="ECO:0000318"/>
    <property type="project" value="GO_Central"/>
</dbReference>
<dbReference type="GO" id="GO:0005525">
    <property type="term" value="F:GTP binding"/>
    <property type="evidence" value="ECO:0000314"/>
    <property type="project" value="UniProtKB"/>
</dbReference>
<dbReference type="GO" id="GO:0003924">
    <property type="term" value="F:GTPase activity"/>
    <property type="evidence" value="ECO:0000318"/>
    <property type="project" value="GO_Central"/>
</dbReference>
<dbReference type="GO" id="GO:0046872">
    <property type="term" value="F:metal ion binding"/>
    <property type="evidence" value="ECO:0007669"/>
    <property type="project" value="UniProtKB-KW"/>
</dbReference>
<dbReference type="GO" id="GO:0019901">
    <property type="term" value="F:protein kinase binding"/>
    <property type="evidence" value="ECO:0000318"/>
    <property type="project" value="GO_Central"/>
</dbReference>
<dbReference type="GO" id="GO:0007015">
    <property type="term" value="P:actin filament organization"/>
    <property type="evidence" value="ECO:0000318"/>
    <property type="project" value="GO_Central"/>
</dbReference>
<dbReference type="GO" id="GO:0030865">
    <property type="term" value="P:cortical cytoskeleton organization"/>
    <property type="evidence" value="ECO:0000318"/>
    <property type="project" value="GO_Central"/>
</dbReference>
<dbReference type="GO" id="GO:0007163">
    <property type="term" value="P:establishment or maintenance of cell polarity"/>
    <property type="evidence" value="ECO:0000318"/>
    <property type="project" value="GO_Central"/>
</dbReference>
<dbReference type="GO" id="GO:0032956">
    <property type="term" value="P:regulation of actin cytoskeleton organization"/>
    <property type="evidence" value="ECO:0000318"/>
    <property type="project" value="GO_Central"/>
</dbReference>
<dbReference type="GO" id="GO:0008360">
    <property type="term" value="P:regulation of cell shape"/>
    <property type="evidence" value="ECO:0000318"/>
    <property type="project" value="GO_Central"/>
</dbReference>
<dbReference type="GO" id="GO:0007165">
    <property type="term" value="P:signal transduction"/>
    <property type="evidence" value="ECO:0000318"/>
    <property type="project" value="GO_Central"/>
</dbReference>
<dbReference type="GO" id="GO:0007264">
    <property type="term" value="P:small GTPase-mediated signal transduction"/>
    <property type="evidence" value="ECO:0007669"/>
    <property type="project" value="InterPro"/>
</dbReference>
<dbReference type="CDD" id="cd00157">
    <property type="entry name" value="Rho"/>
    <property type="match status" value="1"/>
</dbReference>
<dbReference type="FunFam" id="3.40.50.300:FF:000118">
    <property type="entry name" value="Rho-related GTP-binding protein RhoG"/>
    <property type="match status" value="1"/>
</dbReference>
<dbReference type="Gene3D" id="3.40.50.300">
    <property type="entry name" value="P-loop containing nucleotide triphosphate hydrolases"/>
    <property type="match status" value="1"/>
</dbReference>
<dbReference type="InterPro" id="IPR027417">
    <property type="entry name" value="P-loop_NTPase"/>
</dbReference>
<dbReference type="InterPro" id="IPR005225">
    <property type="entry name" value="Small_GTP-bd"/>
</dbReference>
<dbReference type="InterPro" id="IPR001806">
    <property type="entry name" value="Small_GTPase"/>
</dbReference>
<dbReference type="InterPro" id="IPR003578">
    <property type="entry name" value="Small_GTPase_Rho"/>
</dbReference>
<dbReference type="NCBIfam" id="TIGR00231">
    <property type="entry name" value="small_GTP"/>
    <property type="match status" value="1"/>
</dbReference>
<dbReference type="PANTHER" id="PTHR24072">
    <property type="entry name" value="RHO FAMILY GTPASE"/>
    <property type="match status" value="1"/>
</dbReference>
<dbReference type="Pfam" id="PF00071">
    <property type="entry name" value="Ras"/>
    <property type="match status" value="1"/>
</dbReference>
<dbReference type="PRINTS" id="PR00449">
    <property type="entry name" value="RASTRNSFRMNG"/>
</dbReference>
<dbReference type="SMART" id="SM00175">
    <property type="entry name" value="RAB"/>
    <property type="match status" value="1"/>
</dbReference>
<dbReference type="SMART" id="SM00176">
    <property type="entry name" value="RAN"/>
    <property type="match status" value="1"/>
</dbReference>
<dbReference type="SMART" id="SM00173">
    <property type="entry name" value="RAS"/>
    <property type="match status" value="1"/>
</dbReference>
<dbReference type="SMART" id="SM00174">
    <property type="entry name" value="RHO"/>
    <property type="match status" value="1"/>
</dbReference>
<dbReference type="SUPFAM" id="SSF52540">
    <property type="entry name" value="P-loop containing nucleoside triphosphate hydrolases"/>
    <property type="match status" value="1"/>
</dbReference>
<dbReference type="PROSITE" id="PS51420">
    <property type="entry name" value="RHO"/>
    <property type="match status" value="1"/>
</dbReference>
<feature type="chain" id="PRO_0000198912" description="Rho-related protein racC">
    <location>
        <begin position="1"/>
        <end position="191"/>
    </location>
</feature>
<feature type="propeptide" id="PRO_0000281260" description="Removed in mature form" evidence="2">
    <location>
        <begin position="192"/>
        <end position="194"/>
    </location>
</feature>
<feature type="short sequence motif" description="Switch 1" evidence="7">
    <location>
        <begin position="30"/>
        <end position="41"/>
    </location>
</feature>
<feature type="short sequence motif" description="Switch 2" evidence="7">
    <location>
        <begin position="61"/>
        <end position="79"/>
    </location>
</feature>
<feature type="binding site" evidence="3 10">
    <location>
        <position position="17"/>
    </location>
    <ligand>
        <name>GTP</name>
        <dbReference type="ChEBI" id="CHEBI:37565"/>
    </ligand>
</feature>
<feature type="binding site" evidence="3 10">
    <location>
        <position position="19"/>
    </location>
    <ligand>
        <name>GTP</name>
        <dbReference type="ChEBI" id="CHEBI:37565"/>
    </ligand>
</feature>
<feature type="binding site" evidence="3 10">
    <location>
        <position position="20"/>
    </location>
    <ligand>
        <name>GTP</name>
        <dbReference type="ChEBI" id="CHEBI:37565"/>
    </ligand>
</feature>
<feature type="binding site" evidence="3 10">
    <location>
        <position position="21"/>
    </location>
    <ligand>
        <name>GTP</name>
        <dbReference type="ChEBI" id="CHEBI:37565"/>
    </ligand>
</feature>
<feature type="binding site" evidence="3 10">
    <location>
        <position position="21"/>
    </location>
    <ligand>
        <name>Mg(2+)</name>
        <dbReference type="ChEBI" id="CHEBI:18420"/>
    </ligand>
</feature>
<feature type="binding site" evidence="3 10">
    <location>
        <position position="22"/>
    </location>
    <ligand>
        <name>GTP</name>
        <dbReference type="ChEBI" id="CHEBI:37565"/>
    </ligand>
</feature>
<feature type="binding site" evidence="3 10">
    <location>
        <position position="34"/>
    </location>
    <ligand>
        <name>GTP</name>
        <dbReference type="ChEBI" id="CHEBI:37565"/>
    </ligand>
</feature>
<feature type="binding site" evidence="3 10">
    <location>
        <position position="36"/>
    </location>
    <ligand>
        <name>GTP</name>
        <dbReference type="ChEBI" id="CHEBI:37565"/>
    </ligand>
</feature>
<feature type="binding site" evidence="3 10">
    <location>
        <position position="39"/>
    </location>
    <ligand>
        <name>GTP</name>
        <dbReference type="ChEBI" id="CHEBI:37565"/>
    </ligand>
</feature>
<feature type="binding site" evidence="3 10">
    <location>
        <position position="39"/>
    </location>
    <ligand>
        <name>Mg(2+)</name>
        <dbReference type="ChEBI" id="CHEBI:18420"/>
    </ligand>
</feature>
<feature type="binding site" evidence="3 10">
    <location>
        <position position="64"/>
    </location>
    <ligand>
        <name>GTP</name>
        <dbReference type="ChEBI" id="CHEBI:37565"/>
    </ligand>
</feature>
<feature type="binding site" evidence="3 10">
    <location>
        <position position="120"/>
    </location>
    <ligand>
        <name>GTP</name>
        <dbReference type="ChEBI" id="CHEBI:37565"/>
    </ligand>
</feature>
<feature type="binding site" evidence="3 10">
    <location>
        <position position="122"/>
    </location>
    <ligand>
        <name>GTP</name>
        <dbReference type="ChEBI" id="CHEBI:37565"/>
    </ligand>
</feature>
<feature type="binding site" evidence="3 10">
    <location>
        <position position="163"/>
    </location>
    <ligand>
        <name>GTP</name>
        <dbReference type="ChEBI" id="CHEBI:37565"/>
    </ligand>
</feature>
<feature type="binding site" evidence="3 10">
    <location>
        <position position="164"/>
    </location>
    <ligand>
        <name>GTP</name>
        <dbReference type="ChEBI" id="CHEBI:37565"/>
    </ligand>
</feature>
<feature type="modified residue" description="Cysteine methyl ester" evidence="1">
    <location>
        <position position="191"/>
    </location>
</feature>
<feature type="lipid moiety-binding region" description="S-geranylgeranyl cysteine" evidence="2">
    <location>
        <position position="191"/>
    </location>
</feature>
<feature type="mutagenesis site" description="Constitutively active. Interacts with PAK4 and PAK5." evidence="3">
    <original>Q</original>
    <variation>L</variation>
    <location>
        <position position="65"/>
    </location>
</feature>
<feature type="sequence conflict" description="In Ref. 1; AAC47298." evidence="6" ref="1">
    <original>SYSIRKFPE</original>
    <variation>CYTTNEFPK</variation>
    <location>
        <begin position="26"/>
        <end position="34"/>
    </location>
</feature>
<feature type="strand" evidence="11">
    <location>
        <begin position="6"/>
        <end position="15"/>
    </location>
</feature>
<feature type="helix" evidence="11">
    <location>
        <begin position="20"/>
        <end position="29"/>
    </location>
</feature>
<feature type="strand" evidence="11">
    <location>
        <begin position="40"/>
        <end position="50"/>
    </location>
</feature>
<feature type="strand" evidence="11">
    <location>
        <begin position="53"/>
        <end position="62"/>
    </location>
</feature>
<feature type="helix" evidence="11">
    <location>
        <begin position="66"/>
        <end position="68"/>
    </location>
</feature>
<feature type="turn" evidence="11">
    <location>
        <begin position="69"/>
        <end position="71"/>
    </location>
</feature>
<feature type="helix" evidence="11">
    <location>
        <begin position="72"/>
        <end position="75"/>
    </location>
</feature>
<feature type="strand" evidence="11">
    <location>
        <begin position="80"/>
        <end position="87"/>
    </location>
</feature>
<feature type="helix" evidence="11">
    <location>
        <begin position="91"/>
        <end position="99"/>
    </location>
</feature>
<feature type="helix" evidence="11">
    <location>
        <begin position="101"/>
        <end position="108"/>
    </location>
</feature>
<feature type="strand" evidence="11">
    <location>
        <begin position="114"/>
        <end position="119"/>
    </location>
</feature>
<feature type="helix" evidence="11">
    <location>
        <begin position="121"/>
        <end position="123"/>
    </location>
</feature>
<feature type="helix" evidence="11">
    <location>
        <begin position="127"/>
        <end position="135"/>
    </location>
</feature>
<feature type="helix" evidence="11">
    <location>
        <begin position="143"/>
        <end position="152"/>
    </location>
</feature>
<feature type="strand" evidence="11">
    <location>
        <begin position="156"/>
        <end position="160"/>
    </location>
</feature>
<feature type="turn" evidence="11">
    <location>
        <begin position="163"/>
        <end position="165"/>
    </location>
</feature>
<feature type="helix" evidence="11">
    <location>
        <begin position="169"/>
        <end position="181"/>
    </location>
</feature>
<proteinExistence type="evidence at protein level"/>
<protein>
    <recommendedName>
        <fullName>Rho-related protein racC</fullName>
        <shortName evidence="4">EhRacC</shortName>
        <ecNumber evidence="2">3.6.5.2</ecNumber>
    </recommendedName>
</protein>
<evidence type="ECO:0000250" key="1">
    <source>
        <dbReference type="UniProtKB" id="P61585"/>
    </source>
</evidence>
<evidence type="ECO:0000250" key="2">
    <source>
        <dbReference type="UniProtKB" id="P63000"/>
    </source>
</evidence>
<evidence type="ECO:0000269" key="3">
    <source>
    </source>
</evidence>
<evidence type="ECO:0000303" key="4">
    <source>
    </source>
</evidence>
<evidence type="ECO:0000303" key="5">
    <source>
    </source>
</evidence>
<evidence type="ECO:0000305" key="6"/>
<evidence type="ECO:0000305" key="7">
    <source>
    </source>
</evidence>
<evidence type="ECO:0000312" key="8">
    <source>
        <dbReference type="EMBL" id="AAC47298.1"/>
    </source>
</evidence>
<evidence type="ECO:0000312" key="9">
    <source>
        <dbReference type="EMBL" id="EAL47310.1"/>
    </source>
</evidence>
<evidence type="ECO:0007744" key="10">
    <source>
        <dbReference type="PDB" id="4MIT"/>
    </source>
</evidence>
<evidence type="ECO:0007829" key="11">
    <source>
        <dbReference type="PDB" id="4MIT"/>
    </source>
</evidence>
<accession>Q24816</accession>
<accession>A0A175JTV7</accession>
<accession>C4M5T0</accession>
<organism evidence="9">
    <name type="scientific">Entamoeba histolytica (strain ATCC 30459 / HM-1:IMSS / ABRM)</name>
    <dbReference type="NCBI Taxonomy" id="294381"/>
    <lineage>
        <taxon>Eukaryota</taxon>
        <taxon>Amoebozoa</taxon>
        <taxon>Evosea</taxon>
        <taxon>Archamoebae</taxon>
        <taxon>Mastigamoebida</taxon>
        <taxon>Entamoebidae</taxon>
        <taxon>Entamoeba</taxon>
    </lineage>
</organism>